<name>KYNB_SALRD</name>
<feature type="chain" id="PRO_0000362138" description="Kynurenine formamidase">
    <location>
        <begin position="1"/>
        <end position="212"/>
    </location>
</feature>
<feature type="active site" description="Proton donor/acceptor" evidence="1">
    <location>
        <position position="58"/>
    </location>
</feature>
<feature type="binding site" evidence="1">
    <location>
        <position position="17"/>
    </location>
    <ligand>
        <name>substrate</name>
    </ligand>
</feature>
<feature type="binding site" evidence="1">
    <location>
        <position position="48"/>
    </location>
    <ligand>
        <name>Zn(2+)</name>
        <dbReference type="ChEBI" id="CHEBI:29105"/>
        <label>1</label>
    </ligand>
</feature>
<feature type="binding site" evidence="1">
    <location>
        <position position="52"/>
    </location>
    <ligand>
        <name>Zn(2+)</name>
        <dbReference type="ChEBI" id="CHEBI:29105"/>
        <label>1</label>
    </ligand>
</feature>
<feature type="binding site" evidence="1">
    <location>
        <position position="54"/>
    </location>
    <ligand>
        <name>Zn(2+)</name>
        <dbReference type="ChEBI" id="CHEBI:29105"/>
        <label>1</label>
    </ligand>
</feature>
<feature type="binding site" evidence="1">
    <location>
        <position position="54"/>
    </location>
    <ligand>
        <name>Zn(2+)</name>
        <dbReference type="ChEBI" id="CHEBI:29105"/>
        <label>2</label>
    </ligand>
</feature>
<feature type="binding site" evidence="1">
    <location>
        <position position="161"/>
    </location>
    <ligand>
        <name>Zn(2+)</name>
        <dbReference type="ChEBI" id="CHEBI:29105"/>
        <label>2</label>
    </ligand>
</feature>
<feature type="binding site" evidence="1">
    <location>
        <position position="173"/>
    </location>
    <ligand>
        <name>Zn(2+)</name>
        <dbReference type="ChEBI" id="CHEBI:29105"/>
        <label>1</label>
    </ligand>
</feature>
<feature type="binding site" evidence="1">
    <location>
        <position position="173"/>
    </location>
    <ligand>
        <name>Zn(2+)</name>
        <dbReference type="ChEBI" id="CHEBI:29105"/>
        <label>2</label>
    </ligand>
</feature>
<protein>
    <recommendedName>
        <fullName evidence="1">Kynurenine formamidase</fullName>
        <shortName evidence="1">KFA</shortName>
        <shortName evidence="1">KFase</shortName>
        <ecNumber evidence="1">3.5.1.9</ecNumber>
    </recommendedName>
    <alternativeName>
        <fullName evidence="1">Arylformamidase</fullName>
    </alternativeName>
    <alternativeName>
        <fullName evidence="1">N-formylkynurenine formamidase</fullName>
        <shortName evidence="1">FKF</shortName>
    </alternativeName>
</protein>
<dbReference type="EC" id="3.5.1.9" evidence="1"/>
<dbReference type="EMBL" id="CP000159">
    <property type="protein sequence ID" value="ABC46272.1"/>
    <property type="molecule type" value="Genomic_DNA"/>
</dbReference>
<dbReference type="RefSeq" id="WP_011404252.1">
    <property type="nucleotide sequence ID" value="NC_007677.1"/>
</dbReference>
<dbReference type="RefSeq" id="YP_445626.1">
    <property type="nucleotide sequence ID" value="NC_007677.1"/>
</dbReference>
<dbReference type="SMR" id="Q2S2F5"/>
<dbReference type="STRING" id="309807.SRU_1503"/>
<dbReference type="EnsemblBacteria" id="ABC46272">
    <property type="protein sequence ID" value="ABC46272"/>
    <property type="gene ID" value="SRU_1503"/>
</dbReference>
<dbReference type="KEGG" id="sru:SRU_1503"/>
<dbReference type="PATRIC" id="fig|309807.25.peg.1559"/>
<dbReference type="eggNOG" id="COG1878">
    <property type="taxonomic scope" value="Bacteria"/>
</dbReference>
<dbReference type="HOGENOM" id="CLU_030671_3_1_10"/>
<dbReference type="OrthoDB" id="9796085at2"/>
<dbReference type="UniPathway" id="UPA00333">
    <property type="reaction ID" value="UER00454"/>
</dbReference>
<dbReference type="Proteomes" id="UP000008674">
    <property type="component" value="Chromosome"/>
</dbReference>
<dbReference type="GO" id="GO:0004061">
    <property type="term" value="F:arylformamidase activity"/>
    <property type="evidence" value="ECO:0000250"/>
    <property type="project" value="UniProtKB"/>
</dbReference>
<dbReference type="GO" id="GO:0004328">
    <property type="term" value="F:formamidase activity"/>
    <property type="evidence" value="ECO:0007669"/>
    <property type="project" value="InterPro"/>
</dbReference>
<dbReference type="GO" id="GO:0008270">
    <property type="term" value="F:zinc ion binding"/>
    <property type="evidence" value="ECO:0007669"/>
    <property type="project" value="UniProtKB-UniRule"/>
</dbReference>
<dbReference type="GO" id="GO:0043420">
    <property type="term" value="P:anthranilate metabolic process"/>
    <property type="evidence" value="ECO:0000250"/>
    <property type="project" value="UniProtKB"/>
</dbReference>
<dbReference type="GO" id="GO:0019441">
    <property type="term" value="P:L-tryptophan catabolic process to kynurenine"/>
    <property type="evidence" value="ECO:0000250"/>
    <property type="project" value="UniProtKB"/>
</dbReference>
<dbReference type="FunFam" id="3.50.30.50:FF:000001">
    <property type="entry name" value="Kynurenine formamidase"/>
    <property type="match status" value="1"/>
</dbReference>
<dbReference type="Gene3D" id="3.50.30.50">
    <property type="entry name" value="Putative cyclase"/>
    <property type="match status" value="1"/>
</dbReference>
<dbReference type="HAMAP" id="MF_01969">
    <property type="entry name" value="KynB"/>
    <property type="match status" value="1"/>
</dbReference>
<dbReference type="InterPro" id="IPR007325">
    <property type="entry name" value="KFase/CYL"/>
</dbReference>
<dbReference type="InterPro" id="IPR037175">
    <property type="entry name" value="KFase_sf"/>
</dbReference>
<dbReference type="InterPro" id="IPR017484">
    <property type="entry name" value="Kynurenine_formamidase_bac"/>
</dbReference>
<dbReference type="PANTHER" id="PTHR31118">
    <property type="entry name" value="CYCLASE-LIKE PROTEIN 2"/>
    <property type="match status" value="1"/>
</dbReference>
<dbReference type="PANTHER" id="PTHR31118:SF32">
    <property type="entry name" value="KYNURENINE FORMAMIDASE"/>
    <property type="match status" value="1"/>
</dbReference>
<dbReference type="Pfam" id="PF04199">
    <property type="entry name" value="Cyclase"/>
    <property type="match status" value="1"/>
</dbReference>
<dbReference type="SUPFAM" id="SSF102198">
    <property type="entry name" value="Putative cyclase"/>
    <property type="match status" value="1"/>
</dbReference>
<reference key="1">
    <citation type="journal article" date="2005" name="Proc. Natl. Acad. Sci. U.S.A.">
        <title>The genome of Salinibacter ruber: convergence and gene exchange among hyperhalophilic bacteria and archaea.</title>
        <authorList>
            <person name="Mongodin E.F."/>
            <person name="Nelson K.E."/>
            <person name="Daugherty S."/>
            <person name="DeBoy R.T."/>
            <person name="Wister J."/>
            <person name="Khouri H."/>
            <person name="Weidman J."/>
            <person name="Walsh D.A."/>
            <person name="Papke R.T."/>
            <person name="Sanchez Perez G."/>
            <person name="Sharma A.K."/>
            <person name="Nesbo C.L."/>
            <person name="MacLeod D."/>
            <person name="Bapteste E."/>
            <person name="Doolittle W.F."/>
            <person name="Charlebois R.L."/>
            <person name="Legault B."/>
            <person name="Rodriguez-Valera F."/>
        </authorList>
    </citation>
    <scope>NUCLEOTIDE SEQUENCE [LARGE SCALE GENOMIC DNA]</scope>
    <source>
        <strain>DSM 13855 / CECT 5946 / M31</strain>
    </source>
</reference>
<proteinExistence type="inferred from homology"/>
<sequence>MALIDISRSVSPATAVWPGDQEVQWTWTARRNEDESSVNLGSLRLSTHTGTHVDAPLHVKRQGQATDDLPLDSFVGPARVVDVNANAPSVRPEHIGQLDGASAERVLFKTSSGVSPDDEWPDAVVPIQPDTIHALADAGVSLVGTDAPSVDPLDSTDLPAHHALLDTGIVNLEGLVLTNVPPGRYELIALPLKIVGGDAAPVRAVLRDAPDP</sequence>
<keyword id="KW-0378">Hydrolase</keyword>
<keyword id="KW-0479">Metal-binding</keyword>
<keyword id="KW-1185">Reference proteome</keyword>
<keyword id="KW-0823">Tryptophan catabolism</keyword>
<keyword id="KW-0862">Zinc</keyword>
<evidence type="ECO:0000255" key="1">
    <source>
        <dbReference type="HAMAP-Rule" id="MF_01969"/>
    </source>
</evidence>
<accession>Q2S2F5</accession>
<comment type="function">
    <text evidence="1">Catalyzes the hydrolysis of N-formyl-L-kynurenine to L-kynurenine, the second step in the kynurenine pathway of tryptophan degradation.</text>
</comment>
<comment type="catalytic activity">
    <reaction evidence="1">
        <text>N-formyl-L-kynurenine + H2O = L-kynurenine + formate + H(+)</text>
        <dbReference type="Rhea" id="RHEA:13009"/>
        <dbReference type="ChEBI" id="CHEBI:15377"/>
        <dbReference type="ChEBI" id="CHEBI:15378"/>
        <dbReference type="ChEBI" id="CHEBI:15740"/>
        <dbReference type="ChEBI" id="CHEBI:57959"/>
        <dbReference type="ChEBI" id="CHEBI:58629"/>
        <dbReference type="EC" id="3.5.1.9"/>
    </reaction>
</comment>
<comment type="cofactor">
    <cofactor evidence="1">
        <name>Zn(2+)</name>
        <dbReference type="ChEBI" id="CHEBI:29105"/>
    </cofactor>
    <text evidence="1">Binds 2 zinc ions per subunit.</text>
</comment>
<comment type="pathway">
    <text evidence="1">Amino-acid degradation; L-tryptophan degradation via kynurenine pathway; L-kynurenine from L-tryptophan: step 2/2.</text>
</comment>
<comment type="subunit">
    <text evidence="1">Homodimer.</text>
</comment>
<comment type="similarity">
    <text evidence="1">Belongs to the Cyclase 1 superfamily. KynB family.</text>
</comment>
<organism>
    <name type="scientific">Salinibacter ruber (strain DSM 13855 / M31)</name>
    <dbReference type="NCBI Taxonomy" id="309807"/>
    <lineage>
        <taxon>Bacteria</taxon>
        <taxon>Pseudomonadati</taxon>
        <taxon>Rhodothermota</taxon>
        <taxon>Rhodothermia</taxon>
        <taxon>Rhodothermales</taxon>
        <taxon>Salinibacteraceae</taxon>
        <taxon>Salinibacter</taxon>
    </lineage>
</organism>
<gene>
    <name evidence="1" type="primary">kynB</name>
    <name type="ordered locus">SRU_1503</name>
</gene>